<evidence type="ECO:0000250" key="1">
    <source>
        <dbReference type="UniProtKB" id="Q21A54"/>
    </source>
</evidence>
<evidence type="ECO:0000250" key="2">
    <source>
        <dbReference type="UniProtKB" id="Q9XDN5"/>
    </source>
</evidence>
<evidence type="ECO:0000305" key="3"/>
<name>PDUL_CLOD6</name>
<sequence length="209" mass="23188">MENLLNEIVEEVITRVKKEAFIEVEASGRHVHLSREDVDKLFGEGYTLTKLKDLSQPGQYACKERVTITGPKGSIKNVVVLGPCRNETQVEISLTDGSTLGLKAPIKQSGDLEGTLSIKISTQYGEVELDKGLMVAKRHIHMTPKDAEKFNVCDKEIVEAKVMGQRPLTFDDVVIRVSDSFKTYMHIDYDEANACGYSKGTVAKIIKKA</sequence>
<keyword id="KW-0012">Acyltransferase</keyword>
<keyword id="KW-1283">Bacterial microcompartment</keyword>
<keyword id="KW-0479">Metal-binding</keyword>
<keyword id="KW-1185">Reference proteome</keyword>
<keyword id="KW-0808">Transferase</keyword>
<keyword id="KW-0862">Zinc</keyword>
<accession>Q187N2</accession>
<proteinExistence type="inferred from homology"/>
<organism>
    <name type="scientific">Clostridioides difficile (strain 630)</name>
    <name type="common">Peptoclostridium difficile</name>
    <dbReference type="NCBI Taxonomy" id="272563"/>
    <lineage>
        <taxon>Bacteria</taxon>
        <taxon>Bacillati</taxon>
        <taxon>Bacillota</taxon>
        <taxon>Clostridia</taxon>
        <taxon>Peptostreptococcales</taxon>
        <taxon>Peptostreptococcaceae</taxon>
        <taxon>Clostridioides</taxon>
    </lineage>
</organism>
<protein>
    <recommendedName>
        <fullName>Phosphate propanoyltransferase</fullName>
        <ecNumber>2.3.1.222</ecNumber>
    </recommendedName>
    <alternativeName>
        <fullName>Phosphate acyltransferase PduL</fullName>
    </alternativeName>
    <alternativeName>
        <fullName>Phosphotransacylase PduL</fullName>
        <shortName>PTAC</shortName>
    </alternativeName>
    <alternativeName>
        <fullName>Propanediol utilization protein PduL</fullName>
    </alternativeName>
</protein>
<reference key="1">
    <citation type="journal article" date="2006" name="Nat. Genet.">
        <title>The multidrug-resistant human pathogen Clostridium difficile has a highly mobile, mosaic genome.</title>
        <authorList>
            <person name="Sebaihia M."/>
            <person name="Wren B.W."/>
            <person name="Mullany P."/>
            <person name="Fairweather N.F."/>
            <person name="Minton N."/>
            <person name="Stabler R."/>
            <person name="Thomson N.R."/>
            <person name="Roberts A.P."/>
            <person name="Cerdeno-Tarraga A.M."/>
            <person name="Wang H."/>
            <person name="Holden M.T.G."/>
            <person name="Wright A."/>
            <person name="Churcher C."/>
            <person name="Quail M.A."/>
            <person name="Baker S."/>
            <person name="Bason N."/>
            <person name="Brooks K."/>
            <person name="Chillingworth T."/>
            <person name="Cronin A."/>
            <person name="Davis P."/>
            <person name="Dowd L."/>
            <person name="Fraser A."/>
            <person name="Feltwell T."/>
            <person name="Hance Z."/>
            <person name="Holroyd S."/>
            <person name="Jagels K."/>
            <person name="Moule S."/>
            <person name="Mungall K."/>
            <person name="Price C."/>
            <person name="Rabbinowitsch E."/>
            <person name="Sharp S."/>
            <person name="Simmonds M."/>
            <person name="Stevens K."/>
            <person name="Unwin L."/>
            <person name="Whithead S."/>
            <person name="Dupuy B."/>
            <person name="Dougan G."/>
            <person name="Barrell B."/>
            <person name="Parkhill J."/>
        </authorList>
    </citation>
    <scope>NUCLEOTIDE SEQUENCE [LARGE SCALE GENOMIC DNA]</scope>
    <source>
        <strain>630</strain>
    </source>
</reference>
<gene>
    <name type="primary">pduL</name>
    <name type="ordered locus">CD630_19200</name>
</gene>
<dbReference type="EC" id="2.3.1.222"/>
<dbReference type="EMBL" id="AM180355">
    <property type="protein sequence ID" value="CAJ68796.1"/>
    <property type="molecule type" value="Genomic_DNA"/>
</dbReference>
<dbReference type="RefSeq" id="YP_001088427.1">
    <property type="nucleotide sequence ID" value="NC_009089.1"/>
</dbReference>
<dbReference type="SMR" id="Q187N2"/>
<dbReference type="STRING" id="272563.CD630_19200"/>
<dbReference type="EnsemblBacteria" id="CAJ68796">
    <property type="protein sequence ID" value="CAJ68796"/>
    <property type="gene ID" value="CD630_19200"/>
</dbReference>
<dbReference type="KEGG" id="cdf:CD630_19200"/>
<dbReference type="KEGG" id="pdc:CDIF630_02124"/>
<dbReference type="PATRIC" id="fig|272563.120.peg.2016"/>
<dbReference type="eggNOG" id="COG4869">
    <property type="taxonomic scope" value="Bacteria"/>
</dbReference>
<dbReference type="OrthoDB" id="9784365at2"/>
<dbReference type="PhylomeDB" id="Q187N2"/>
<dbReference type="BioCyc" id="PDIF272563:G12WB-2064-MONOMER"/>
<dbReference type="UniPathway" id="UPA00621"/>
<dbReference type="Proteomes" id="UP000001978">
    <property type="component" value="Chromosome"/>
</dbReference>
<dbReference type="GO" id="GO:0031469">
    <property type="term" value="C:bacterial microcompartment"/>
    <property type="evidence" value="ECO:0007669"/>
    <property type="project" value="UniProtKB-SubCell"/>
</dbReference>
<dbReference type="GO" id="GO:0016747">
    <property type="term" value="F:acyltransferase activity, transferring groups other than amino-acyl groups"/>
    <property type="evidence" value="ECO:0007669"/>
    <property type="project" value="InterPro"/>
</dbReference>
<dbReference type="GO" id="GO:0046872">
    <property type="term" value="F:metal ion binding"/>
    <property type="evidence" value="ECO:0007669"/>
    <property type="project" value="UniProtKB-KW"/>
</dbReference>
<dbReference type="GO" id="GO:0051144">
    <property type="term" value="P:propanediol catabolic process"/>
    <property type="evidence" value="ECO:0007669"/>
    <property type="project" value="UniProtKB-UniPathway"/>
</dbReference>
<dbReference type="InterPro" id="IPR008300">
    <property type="entry name" value="PTAC"/>
</dbReference>
<dbReference type="NCBIfam" id="NF040837">
    <property type="entry name" value="BMC_EutD_Gpos"/>
    <property type="match status" value="1"/>
</dbReference>
<dbReference type="NCBIfam" id="NF011652">
    <property type="entry name" value="PRK15070.1"/>
    <property type="match status" value="1"/>
</dbReference>
<dbReference type="PANTHER" id="PTHR39453">
    <property type="entry name" value="PHOSPHATE PROPANOYLTRANSFERASE"/>
    <property type="match status" value="1"/>
</dbReference>
<dbReference type="PANTHER" id="PTHR39453:SF1">
    <property type="entry name" value="PHOSPHATE PROPANOYLTRANSFERASE"/>
    <property type="match status" value="1"/>
</dbReference>
<dbReference type="Pfam" id="PF06130">
    <property type="entry name" value="PTAC"/>
    <property type="match status" value="1"/>
</dbReference>
<dbReference type="PIRSF" id="PIRSF010130">
    <property type="entry name" value="PduL"/>
    <property type="match status" value="1"/>
</dbReference>
<comment type="function">
    <text evidence="2">Involved in 1,2-propanediol (1,2-PD) utilization within the bacterial microcompartment (BMC) dedicated to 1,2-PD degradation by catalyzing the conversion of propanoyl-CoA to propanoyl-phosphate.</text>
</comment>
<comment type="catalytic activity">
    <reaction evidence="2">
        <text>propanoyl-CoA + phosphate = propanoyl phosphate + CoA</text>
        <dbReference type="Rhea" id="RHEA:28046"/>
        <dbReference type="ChEBI" id="CHEBI:43474"/>
        <dbReference type="ChEBI" id="CHEBI:57287"/>
        <dbReference type="ChEBI" id="CHEBI:57392"/>
        <dbReference type="ChEBI" id="CHEBI:58933"/>
        <dbReference type="EC" id="2.3.1.222"/>
    </reaction>
</comment>
<comment type="cofactor">
    <cofactor evidence="1">
        <name>Zn(2+)</name>
        <dbReference type="ChEBI" id="CHEBI:29105"/>
    </cofactor>
    <text evidence="1">There are 2 Zn(2+) ions per monomer; Zn(2+) and CoA bind inbetween the 2 domains in each monomer.</text>
</comment>
<comment type="pathway">
    <text>Polyol metabolism; 1,2-propanediol degradation.</text>
</comment>
<comment type="subcellular location">
    <subcellularLocation>
        <location evidence="2">Bacterial microcompartment</location>
    </subcellularLocation>
</comment>
<comment type="domain">
    <text evidence="1">Formed by 2 beta-barrels, each is capped on both ends by short alpha-helices.</text>
</comment>
<comment type="similarity">
    <text evidence="3">Belongs to the PduL family.</text>
</comment>
<feature type="chain" id="PRO_0000407708" description="Phosphate propanoyltransferase">
    <location>
        <begin position="1"/>
        <end position="209"/>
    </location>
</feature>
<feature type="binding site" evidence="1">
    <location>
        <begin position="26"/>
        <end position="28"/>
    </location>
    <ligand>
        <name>CoA</name>
        <dbReference type="ChEBI" id="CHEBI:57287"/>
    </ligand>
</feature>
<feature type="binding site" evidence="1">
    <location>
        <position position="30"/>
    </location>
    <ligand>
        <name>Zn(2+)</name>
        <dbReference type="ChEBI" id="CHEBI:29105"/>
        <label>1</label>
    </ligand>
</feature>
<feature type="binding site" evidence="1">
    <location>
        <position position="32"/>
    </location>
    <ligand>
        <name>Zn(2+)</name>
        <dbReference type="ChEBI" id="CHEBI:29105"/>
        <label>1</label>
    </ligand>
</feature>
<feature type="binding site" evidence="1">
    <location>
        <position position="72"/>
    </location>
    <ligand>
        <name>CoA</name>
        <dbReference type="ChEBI" id="CHEBI:57287"/>
    </ligand>
</feature>
<feature type="binding site" evidence="1">
    <location>
        <position position="85"/>
    </location>
    <ligand>
        <name>phosphate</name>
        <dbReference type="ChEBI" id="CHEBI:43474"/>
    </ligand>
</feature>
<feature type="binding site" evidence="1">
    <location>
        <position position="91"/>
    </location>
    <ligand>
        <name>Zn(2+)</name>
        <dbReference type="ChEBI" id="CHEBI:29105"/>
        <label>1</label>
    </ligand>
</feature>
<feature type="binding site" evidence="1">
    <location>
        <position position="139"/>
    </location>
    <ligand>
        <name>Zn(2+)</name>
        <dbReference type="ChEBI" id="CHEBI:29105"/>
        <label>2</label>
    </ligand>
</feature>
<feature type="binding site" evidence="1">
    <location>
        <position position="141"/>
    </location>
    <ligand>
        <name>Zn(2+)</name>
        <dbReference type="ChEBI" id="CHEBI:29105"/>
        <label>2</label>
    </ligand>
</feature>
<feature type="binding site" evidence="1">
    <location>
        <position position="186"/>
    </location>
    <ligand>
        <name>Zn(2+)</name>
        <dbReference type="ChEBI" id="CHEBI:29105"/>
        <label>2</label>
    </ligand>
</feature>
<feature type="binding site" evidence="1">
    <location>
        <position position="193"/>
    </location>
    <ligand>
        <name>CoA</name>
        <dbReference type="ChEBI" id="CHEBI:57287"/>
    </ligand>
</feature>